<protein>
    <recommendedName>
        <fullName evidence="4">3-demethoxyubiquinol 3-hydroxylase</fullName>
        <ecNumber evidence="2">1.14.99.60</ecNumber>
    </recommendedName>
    <alternativeName>
        <fullName>2-octaprenyl-3-methyl-6-methoxy-1,4-benzoquinol hydroxylase</fullName>
    </alternativeName>
</protein>
<comment type="function">
    <text evidence="2">Catalyzes the hydroxylation of 2-octaprenyl-3-methyl-6-methoxy-1,4-benzoquinol during ubiquinone biosynthesis.</text>
</comment>
<comment type="catalytic activity">
    <reaction evidence="2">
        <text>a 5-methoxy-2-methyl-3-(all-trans-polyprenyl)benzene-1,4-diol + AH2 + O2 = a 3-demethylubiquinol + A + H2O</text>
        <dbReference type="Rhea" id="RHEA:50908"/>
        <dbReference type="Rhea" id="RHEA-COMP:10859"/>
        <dbReference type="Rhea" id="RHEA-COMP:10914"/>
        <dbReference type="ChEBI" id="CHEBI:13193"/>
        <dbReference type="ChEBI" id="CHEBI:15377"/>
        <dbReference type="ChEBI" id="CHEBI:15379"/>
        <dbReference type="ChEBI" id="CHEBI:17499"/>
        <dbReference type="ChEBI" id="CHEBI:84167"/>
        <dbReference type="ChEBI" id="CHEBI:84422"/>
        <dbReference type="EC" id="1.14.99.60"/>
    </reaction>
</comment>
<comment type="cofactor">
    <cofactor evidence="1">
        <name>FAD</name>
        <dbReference type="ChEBI" id="CHEBI:57692"/>
    </cofactor>
</comment>
<comment type="pathway">
    <text evidence="2">Cofactor biosynthesis; ubiquinone biosynthesis.</text>
</comment>
<comment type="subunit">
    <text evidence="3">Component of the Ubi complex metabolon, which regroups five ubiquinone biosynthesis proteins (UbiE, UbiF, UbiG, UbiH and UbiI) and two accessory factors (UbiK and the lipid-binding protein UbiJ).</text>
</comment>
<comment type="interaction">
    <interactant intactId="EBI-562588">
        <id>P75728</id>
    </interactant>
    <interactant intactId="EBI-9152908">
        <id>P75680</id>
        <label>insO1</label>
    </interactant>
    <organismsDiffer>false</organismsDiffer>
    <experiments>3</experiments>
</comment>
<comment type="interaction">
    <interactant intactId="EBI-562588">
        <id>P75728</id>
    </interactant>
    <interactant intactId="EBI-562744">
        <id>P33230</id>
        <label>rcbA</label>
    </interactant>
    <organismsDiffer>false</organismsDiffer>
    <experiments>2</experiments>
</comment>
<comment type="subcellular location">
    <subcellularLocation>
        <location evidence="3">Cytoplasm</location>
    </subcellularLocation>
</comment>
<comment type="similarity">
    <text evidence="4">Belongs to the UbiH/COQ6 family.</text>
</comment>
<dbReference type="EC" id="1.14.99.60" evidence="2"/>
<dbReference type="EMBL" id="U00096">
    <property type="protein sequence ID" value="AAC73763.1"/>
    <property type="molecule type" value="Genomic_DNA"/>
</dbReference>
<dbReference type="EMBL" id="AP009048">
    <property type="protein sequence ID" value="BAA35316.1"/>
    <property type="molecule type" value="Genomic_DNA"/>
</dbReference>
<dbReference type="EMBL" id="U82598">
    <property type="protein sequence ID" value="AAB40864.1"/>
    <property type="molecule type" value="Genomic_DNA"/>
</dbReference>
<dbReference type="PIR" id="D64801">
    <property type="entry name" value="D64801"/>
</dbReference>
<dbReference type="RefSeq" id="NP_415195.1">
    <property type="nucleotide sequence ID" value="NC_000913.3"/>
</dbReference>
<dbReference type="RefSeq" id="WP_000184541.1">
    <property type="nucleotide sequence ID" value="NZ_SSZK01000037.1"/>
</dbReference>
<dbReference type="SMR" id="P75728"/>
<dbReference type="BioGRID" id="4261231">
    <property type="interactions" value="300"/>
</dbReference>
<dbReference type="BioGRID" id="849642">
    <property type="interactions" value="6"/>
</dbReference>
<dbReference type="DIP" id="DIP-11069N"/>
<dbReference type="FunCoup" id="P75728">
    <property type="interactions" value="572"/>
</dbReference>
<dbReference type="IntAct" id="P75728">
    <property type="interactions" value="12"/>
</dbReference>
<dbReference type="STRING" id="511145.b0662"/>
<dbReference type="jPOST" id="P75728"/>
<dbReference type="PaxDb" id="511145-b0662"/>
<dbReference type="DNASU" id="945261"/>
<dbReference type="EnsemblBacteria" id="AAC73763">
    <property type="protein sequence ID" value="AAC73763"/>
    <property type="gene ID" value="b0662"/>
</dbReference>
<dbReference type="GeneID" id="945261"/>
<dbReference type="KEGG" id="ecj:JW0659"/>
<dbReference type="KEGG" id="eco:b0662"/>
<dbReference type="KEGG" id="ecoc:C3026_03310"/>
<dbReference type="PATRIC" id="fig|1411691.4.peg.1606"/>
<dbReference type="EchoBASE" id="EB3422"/>
<dbReference type="eggNOG" id="COG0654">
    <property type="taxonomic scope" value="Bacteria"/>
</dbReference>
<dbReference type="HOGENOM" id="CLU_009665_8_3_6"/>
<dbReference type="InParanoid" id="P75728"/>
<dbReference type="OMA" id="QQDITWQ"/>
<dbReference type="OrthoDB" id="9769565at2"/>
<dbReference type="PhylomeDB" id="P75728"/>
<dbReference type="BioCyc" id="EcoCyc:OCTAPRENYL-METHYL-METHOXY-BENZOQ-OH-MON"/>
<dbReference type="BioCyc" id="MetaCyc:OCTAPRENYL-METHYL-METHOXY-BENZOQ-OH-MON"/>
<dbReference type="BRENDA" id="1.14.99.60">
    <property type="organism ID" value="2026"/>
</dbReference>
<dbReference type="UniPathway" id="UPA00232"/>
<dbReference type="PRO" id="PR:P75728"/>
<dbReference type="Proteomes" id="UP000000625">
    <property type="component" value="Chromosome"/>
</dbReference>
<dbReference type="GO" id="GO:0005737">
    <property type="term" value="C:cytoplasm"/>
    <property type="evidence" value="ECO:0007669"/>
    <property type="project" value="UniProtKB-SubCell"/>
</dbReference>
<dbReference type="GO" id="GO:0110142">
    <property type="term" value="C:ubiquinone biosynthesis complex"/>
    <property type="evidence" value="ECO:0000314"/>
    <property type="project" value="EcoCyc"/>
</dbReference>
<dbReference type="GO" id="GO:0008682">
    <property type="term" value="F:3-demethoxyubiquinol 3-hydroxylase activity"/>
    <property type="evidence" value="ECO:0000315"/>
    <property type="project" value="EcoliWiki"/>
</dbReference>
<dbReference type="GO" id="GO:0071949">
    <property type="term" value="F:FAD binding"/>
    <property type="evidence" value="ECO:0007669"/>
    <property type="project" value="InterPro"/>
</dbReference>
<dbReference type="GO" id="GO:0016705">
    <property type="term" value="F:oxidoreductase activity, acting on paired donors, with incorporation or reduction of molecular oxygen"/>
    <property type="evidence" value="ECO:0000250"/>
    <property type="project" value="EcoCyc"/>
</dbReference>
<dbReference type="GO" id="GO:0006744">
    <property type="term" value="P:ubiquinone biosynthetic process"/>
    <property type="evidence" value="ECO:0000315"/>
    <property type="project" value="EcoCyc"/>
</dbReference>
<dbReference type="FunFam" id="3.50.50.60:FF:000048">
    <property type="entry name" value="2-octaprenyl-3-methyl-6-methoxy-1,4-benzoquinol hydroxylase"/>
    <property type="match status" value="1"/>
</dbReference>
<dbReference type="FunFam" id="3.50.50.60:FF:000021">
    <property type="entry name" value="Ubiquinone biosynthesis monooxygenase COQ6"/>
    <property type="match status" value="1"/>
</dbReference>
<dbReference type="Gene3D" id="3.50.50.60">
    <property type="entry name" value="FAD/NAD(P)-binding domain"/>
    <property type="match status" value="2"/>
</dbReference>
<dbReference type="InterPro" id="IPR002938">
    <property type="entry name" value="FAD-bd"/>
</dbReference>
<dbReference type="InterPro" id="IPR036188">
    <property type="entry name" value="FAD/NAD-bd_sf"/>
</dbReference>
<dbReference type="InterPro" id="IPR018168">
    <property type="entry name" value="Ubi_Hdrlase_CS"/>
</dbReference>
<dbReference type="InterPro" id="IPR010971">
    <property type="entry name" value="UbiH/COQ6"/>
</dbReference>
<dbReference type="InterPro" id="IPR051205">
    <property type="entry name" value="UbiH/COQ6_monooxygenase"/>
</dbReference>
<dbReference type="NCBIfam" id="NF005951">
    <property type="entry name" value="PRK08020.1"/>
    <property type="match status" value="1"/>
</dbReference>
<dbReference type="NCBIfam" id="TIGR01988">
    <property type="entry name" value="Ubi-OHases"/>
    <property type="match status" value="1"/>
</dbReference>
<dbReference type="PANTHER" id="PTHR43876:SF10">
    <property type="entry name" value="3-DEMETHOXYUBIQUINOL 3-HYDROXYLASE"/>
    <property type="match status" value="1"/>
</dbReference>
<dbReference type="PANTHER" id="PTHR43876">
    <property type="entry name" value="UBIQUINONE BIOSYNTHESIS MONOOXYGENASE COQ6, MITOCHONDRIAL"/>
    <property type="match status" value="1"/>
</dbReference>
<dbReference type="Pfam" id="PF01494">
    <property type="entry name" value="FAD_binding_3"/>
    <property type="match status" value="1"/>
</dbReference>
<dbReference type="PRINTS" id="PR00420">
    <property type="entry name" value="RNGMNOXGNASE"/>
</dbReference>
<dbReference type="SUPFAM" id="SSF51905">
    <property type="entry name" value="FAD/NAD(P)-binding domain"/>
    <property type="match status" value="1"/>
</dbReference>
<dbReference type="PROSITE" id="PS01304">
    <property type="entry name" value="UBIH"/>
    <property type="match status" value="1"/>
</dbReference>
<name>UBIF_ECOLI</name>
<proteinExistence type="evidence at protein level"/>
<gene>
    <name type="primary">ubiF</name>
    <name type="synonym">yleB</name>
    <name type="ordered locus">b0662</name>
    <name type="ordered locus">JW0659</name>
</gene>
<accession>P75728</accession>
<accession>P77111</accession>
<reference key="1">
    <citation type="journal article" date="1996" name="DNA Res.">
        <title>A 718-kb DNA sequence of the Escherichia coli K-12 genome corresponding to the 12.7-28.0 min region on the linkage map.</title>
        <authorList>
            <person name="Oshima T."/>
            <person name="Aiba H."/>
            <person name="Baba T."/>
            <person name="Fujita K."/>
            <person name="Hayashi K."/>
            <person name="Honjo A."/>
            <person name="Ikemoto K."/>
            <person name="Inada T."/>
            <person name="Itoh T."/>
            <person name="Kajihara M."/>
            <person name="Kanai K."/>
            <person name="Kashimoto K."/>
            <person name="Kimura S."/>
            <person name="Kitagawa M."/>
            <person name="Makino K."/>
            <person name="Masuda S."/>
            <person name="Miki T."/>
            <person name="Mizobuchi K."/>
            <person name="Mori H."/>
            <person name="Motomura K."/>
            <person name="Nakamura Y."/>
            <person name="Nashimoto H."/>
            <person name="Nishio Y."/>
            <person name="Saito N."/>
            <person name="Sampei G."/>
            <person name="Seki Y."/>
            <person name="Tagami H."/>
            <person name="Takemoto K."/>
            <person name="Wada C."/>
            <person name="Yamamoto Y."/>
            <person name="Yano M."/>
            <person name="Horiuchi T."/>
        </authorList>
    </citation>
    <scope>NUCLEOTIDE SEQUENCE [LARGE SCALE GENOMIC DNA]</scope>
    <source>
        <strain>K12 / W3110 / ATCC 27325 / DSM 5911</strain>
    </source>
</reference>
<reference key="2">
    <citation type="journal article" date="1997" name="Science">
        <title>The complete genome sequence of Escherichia coli K-12.</title>
        <authorList>
            <person name="Blattner F.R."/>
            <person name="Plunkett G. III"/>
            <person name="Bloch C.A."/>
            <person name="Perna N.T."/>
            <person name="Burland V."/>
            <person name="Riley M."/>
            <person name="Collado-Vides J."/>
            <person name="Glasner J.D."/>
            <person name="Rode C.K."/>
            <person name="Mayhew G.F."/>
            <person name="Gregor J."/>
            <person name="Davis N.W."/>
            <person name="Kirkpatrick H.A."/>
            <person name="Goeden M.A."/>
            <person name="Rose D.J."/>
            <person name="Mau B."/>
            <person name="Shao Y."/>
        </authorList>
    </citation>
    <scope>NUCLEOTIDE SEQUENCE [LARGE SCALE GENOMIC DNA]</scope>
    <source>
        <strain>K12 / MG1655 / ATCC 47076</strain>
    </source>
</reference>
<reference key="3">
    <citation type="journal article" date="2006" name="Mol. Syst. Biol.">
        <title>Highly accurate genome sequences of Escherichia coli K-12 strains MG1655 and W3110.</title>
        <authorList>
            <person name="Hayashi K."/>
            <person name="Morooka N."/>
            <person name="Yamamoto Y."/>
            <person name="Fujita K."/>
            <person name="Isono K."/>
            <person name="Choi S."/>
            <person name="Ohtsubo E."/>
            <person name="Baba T."/>
            <person name="Wanner B.L."/>
            <person name="Mori H."/>
            <person name="Horiuchi T."/>
        </authorList>
    </citation>
    <scope>NUCLEOTIDE SEQUENCE [LARGE SCALE GENOMIC DNA]</scope>
    <source>
        <strain>K12 / W3110 / ATCC 27325 / DSM 5911</strain>
    </source>
</reference>
<reference key="4">
    <citation type="submission" date="1997-01" db="EMBL/GenBank/DDBJ databases">
        <title>Sequence of minutes 4-25 of Escherichia coli.</title>
        <authorList>
            <person name="Chung E."/>
            <person name="Allen E."/>
            <person name="Araujo R."/>
            <person name="Aparicio A.M."/>
            <person name="Davis K."/>
            <person name="Duncan M."/>
            <person name="Federspiel N."/>
            <person name="Hyman R."/>
            <person name="Kalman S."/>
            <person name="Komp C."/>
            <person name="Kurdi O."/>
            <person name="Lew H."/>
            <person name="Lin D."/>
            <person name="Namath A."/>
            <person name="Oefner P."/>
            <person name="Roberts D."/>
            <person name="Schramm S."/>
            <person name="Davis R.W."/>
        </authorList>
    </citation>
    <scope>NUCLEOTIDE SEQUENCE [LARGE SCALE GENOMIC DNA] OF 1-337</scope>
    <source>
        <strain>K12 / MG1655 / ATCC 47076</strain>
    </source>
</reference>
<reference key="5">
    <citation type="journal article" date="2000" name="FEMS Microbiol. Lett.">
        <title>Ubiquinone (coenzyme Q) biosynthesis in Escherichia coli: identification of the ubiF gene.</title>
        <authorList>
            <person name="Kwon O."/>
            <person name="Kotsakis A."/>
            <person name="Meganathan R."/>
        </authorList>
    </citation>
    <scope>FUNCTION</scope>
    <scope>CATALYTIC ACTIVITY</scope>
    <scope>PATHWAY</scope>
</reference>
<reference key="6">
    <citation type="journal article" date="2019" name="Cell Chem. Biol.">
        <title>A soluble metabolon synthesizes the isoprenoid lipid ubiquinone.</title>
        <authorList>
            <person name="Hajj Chehade M."/>
            <person name="Pelosi L."/>
            <person name="Fyfe C.D."/>
            <person name="Loiseau L."/>
            <person name="Rascalou B."/>
            <person name="Brugiere S."/>
            <person name="Kazemzadeh K."/>
            <person name="Vo C.D."/>
            <person name="Ciccone L."/>
            <person name="Aussel L."/>
            <person name="Coute Y."/>
            <person name="Fontecave M."/>
            <person name="Barras F."/>
            <person name="Lombard M."/>
            <person name="Pierrel F."/>
        </authorList>
    </citation>
    <scope>SUBUNIT</scope>
    <scope>SUBCELLULAR LOCATION</scope>
</reference>
<keyword id="KW-0963">Cytoplasm</keyword>
<keyword id="KW-0274">FAD</keyword>
<keyword id="KW-0285">Flavoprotein</keyword>
<keyword id="KW-0503">Monooxygenase</keyword>
<keyword id="KW-0560">Oxidoreductase</keyword>
<keyword id="KW-1185">Reference proteome</keyword>
<keyword id="KW-0831">Ubiquinone biosynthesis</keyword>
<evidence type="ECO:0000250" key="1">
    <source>
        <dbReference type="UniProtKB" id="P53318"/>
    </source>
</evidence>
<evidence type="ECO:0000269" key="2">
    <source>
    </source>
</evidence>
<evidence type="ECO:0000269" key="3">
    <source>
    </source>
</evidence>
<evidence type="ECO:0000305" key="4"/>
<organism>
    <name type="scientific">Escherichia coli (strain K12)</name>
    <dbReference type="NCBI Taxonomy" id="83333"/>
    <lineage>
        <taxon>Bacteria</taxon>
        <taxon>Pseudomonadati</taxon>
        <taxon>Pseudomonadota</taxon>
        <taxon>Gammaproteobacteria</taxon>
        <taxon>Enterobacterales</taxon>
        <taxon>Enterobacteriaceae</taxon>
        <taxon>Escherichia</taxon>
    </lineage>
</organism>
<sequence length="391" mass="42953">MTNQPTEIAIVGGGMVGGALALGLAQHGFAVTVIEHAEPAPFVADSQPDVRISAISAASVSLLKGLGVWDAVQAMRCHPYRRLETWEWETAHVVFDAAELKLPLLGYMVENTVLQQALWQALEAHPKVTLRVPGSLIALHRHDDLQELELKGGEVIRAKLVIGADGANSQVRQMAGIGVHAWQYAQSCMLISVQCENDPGDSTWQQFTPDGPRAFLPLFDNWASLVWYDSPARIRQLQNMNMAQLQAEIAKHFPSRLGYVTPLAAGAFPLTRRHALQYVQPGLALVGDAAHTIHPLAGQGVNLGYRDVDALIDVLVNARSYGEAWASYPVLKRYQMRRMADNFIMQSGMDLFYAGFSNNLPPLRFMRNLGLMAAERAGVLKRQALKYALGL</sequence>
<feature type="chain" id="PRO_0000207587" description="3-demethoxyubiquinol 3-hydroxylase">
    <location>
        <begin position="1"/>
        <end position="391"/>
    </location>
</feature>